<gene>
    <name type="primary">METTL6</name>
</gene>
<comment type="function">
    <text evidence="2">S-adenosyl-L-methionine-dependent methyltransferase that mediates N(3)-methylcytidine modification of residue 32 of the tRNA anticodon loop of tRNA(Ser), including tRNA(Ser)(UGA) and tRNA(Ser)(GCU). Interaction with SARS1/SerRS is required for N(3)-methylcytidine methylation.</text>
</comment>
<comment type="catalytic activity">
    <reaction evidence="1">
        <text>cytidine(32) in tRNA(Ser) + S-adenosyl-L-methionine = N(3)-methylcytidine(32) in tRNA(Ser) + S-adenosyl-L-homocysteine + H(+)</text>
        <dbReference type="Rhea" id="RHEA:50956"/>
        <dbReference type="Rhea" id="RHEA-COMP:12849"/>
        <dbReference type="Rhea" id="RHEA-COMP:12851"/>
        <dbReference type="ChEBI" id="CHEBI:15378"/>
        <dbReference type="ChEBI" id="CHEBI:57856"/>
        <dbReference type="ChEBI" id="CHEBI:59789"/>
        <dbReference type="ChEBI" id="CHEBI:74894"/>
        <dbReference type="ChEBI" id="CHEBI:82748"/>
    </reaction>
    <physiologicalReaction direction="left-to-right" evidence="1">
        <dbReference type="Rhea" id="RHEA:50957"/>
    </physiologicalReaction>
</comment>
<comment type="subunit">
    <text evidence="2">Monomer. Interacts with SARS1/SerRS; interaction is mediated via tRNA(Ser) and is required for N(3)-methylcytidine methylation.</text>
</comment>
<comment type="subcellular location">
    <subcellularLocation>
        <location evidence="2">Cytoplasm</location>
    </subcellularLocation>
    <subcellularLocation>
        <location evidence="2">Nucleus</location>
    </subcellularLocation>
</comment>
<comment type="similarity">
    <text evidence="3">Belongs to the methyltransferase superfamily. METL family.</text>
</comment>
<feature type="chain" id="PRO_0000240313" description="tRNA N(3)-cytidine methyltransferase METTL6">
    <location>
        <begin position="1"/>
        <end position="282"/>
    </location>
</feature>
<feature type="binding site" evidence="2">
    <location>
        <position position="45"/>
    </location>
    <ligand>
        <name>S-adenosyl-L-methionine</name>
        <dbReference type="ChEBI" id="CHEBI:59789"/>
    </ligand>
</feature>
<feature type="binding site" evidence="2">
    <location>
        <position position="49"/>
    </location>
    <ligand>
        <name>S-adenosyl-L-methionine</name>
        <dbReference type="ChEBI" id="CHEBI:59789"/>
    </ligand>
</feature>
<feature type="binding site" evidence="2">
    <location>
        <position position="87"/>
    </location>
    <ligand>
        <name>S-adenosyl-L-methionine</name>
        <dbReference type="ChEBI" id="CHEBI:59789"/>
    </ligand>
</feature>
<feature type="binding site" evidence="2">
    <location>
        <position position="110"/>
    </location>
    <ligand>
        <name>S-adenosyl-L-methionine</name>
        <dbReference type="ChEBI" id="CHEBI:59789"/>
    </ligand>
</feature>
<feature type="binding site" evidence="2">
    <location>
        <position position="136"/>
    </location>
    <ligand>
        <name>S-adenosyl-L-methionine</name>
        <dbReference type="ChEBI" id="CHEBI:59789"/>
    </ligand>
</feature>
<feature type="binding site" evidence="2">
    <location>
        <position position="137"/>
    </location>
    <ligand>
        <name>S-adenosyl-L-methionine</name>
        <dbReference type="ChEBI" id="CHEBI:59789"/>
    </ligand>
</feature>
<feature type="binding site" evidence="2">
    <location>
        <position position="157"/>
    </location>
    <ligand>
        <name>S-adenosyl-L-methionine</name>
        <dbReference type="ChEBI" id="CHEBI:59789"/>
    </ligand>
</feature>
<organism>
    <name type="scientific">Pongo abelii</name>
    <name type="common">Sumatran orangutan</name>
    <name type="synonym">Pongo pygmaeus abelii</name>
    <dbReference type="NCBI Taxonomy" id="9601"/>
    <lineage>
        <taxon>Eukaryota</taxon>
        <taxon>Metazoa</taxon>
        <taxon>Chordata</taxon>
        <taxon>Craniata</taxon>
        <taxon>Vertebrata</taxon>
        <taxon>Euteleostomi</taxon>
        <taxon>Mammalia</taxon>
        <taxon>Eutheria</taxon>
        <taxon>Euarchontoglires</taxon>
        <taxon>Primates</taxon>
        <taxon>Haplorrhini</taxon>
        <taxon>Catarrhini</taxon>
        <taxon>Hominidae</taxon>
        <taxon>Pongo</taxon>
    </lineage>
</organism>
<sequence>MASLQRKGLQARILTSEEEEKLKRDQTLVSDFKQQKLEQEAQKNWDLFYKRNSTNFFKDRHWTTREFEELRSCREFEDQKLTMLEAGRGVGNCLFPLLEEDPNIFAYACDFSPRAVEYVKQNPLYDTERCKVFQCDLTKDDLLDHVPPESVDVVMLIFVLSAVHPDKMHLVLQNIYKVLKPGKSVLFRDYGLYDHAMLRFKAGSKLGENFYVRQDGTRSYFFTDEFLAQLFMDTGYEEVVNEYVFRETVNKKEGLCVPRVFLQSKFLKPPKNPSPVVPGPGS</sequence>
<evidence type="ECO:0000250" key="1">
    <source>
        <dbReference type="UniProtKB" id="Q8BVH9"/>
    </source>
</evidence>
<evidence type="ECO:0000250" key="2">
    <source>
        <dbReference type="UniProtKB" id="Q8TCB7"/>
    </source>
</evidence>
<evidence type="ECO:0000305" key="3"/>
<protein>
    <recommendedName>
        <fullName evidence="3">tRNA N(3)-cytidine methyltransferase METTL6</fullName>
        <ecNumber evidence="1">2.1.1.-</ecNumber>
    </recommendedName>
    <alternativeName>
        <fullName>Methyltransferase-like protein 6</fullName>
    </alternativeName>
</protein>
<proteinExistence type="evidence at transcript level"/>
<keyword id="KW-0963">Cytoplasm</keyword>
<keyword id="KW-0489">Methyltransferase</keyword>
<keyword id="KW-0539">Nucleus</keyword>
<keyword id="KW-1185">Reference proteome</keyword>
<keyword id="KW-0949">S-adenosyl-L-methionine</keyword>
<keyword id="KW-0808">Transferase</keyword>
<keyword id="KW-0819">tRNA processing</keyword>
<name>METL6_PONAB</name>
<accession>Q5RDV8</accession>
<dbReference type="EC" id="2.1.1.-" evidence="1"/>
<dbReference type="EMBL" id="CR857786">
    <property type="protein sequence ID" value="CAH90049.1"/>
    <property type="molecule type" value="mRNA"/>
</dbReference>
<dbReference type="RefSeq" id="NP_001124980.1">
    <property type="nucleotide sequence ID" value="NM_001131508.1"/>
</dbReference>
<dbReference type="SMR" id="Q5RDV8"/>
<dbReference type="FunCoup" id="Q5RDV8">
    <property type="interactions" value="3305"/>
</dbReference>
<dbReference type="STRING" id="9601.ENSPPYP00000015764"/>
<dbReference type="GeneID" id="100171853"/>
<dbReference type="KEGG" id="pon:100171853"/>
<dbReference type="CTD" id="131965"/>
<dbReference type="eggNOG" id="KOG2361">
    <property type="taxonomic scope" value="Eukaryota"/>
</dbReference>
<dbReference type="InParanoid" id="Q5RDV8"/>
<dbReference type="OrthoDB" id="417697at2759"/>
<dbReference type="Proteomes" id="UP000001595">
    <property type="component" value="Unplaced"/>
</dbReference>
<dbReference type="GO" id="GO:0005737">
    <property type="term" value="C:cytoplasm"/>
    <property type="evidence" value="ECO:0000250"/>
    <property type="project" value="UniProtKB"/>
</dbReference>
<dbReference type="GO" id="GO:0005634">
    <property type="term" value="C:nucleus"/>
    <property type="evidence" value="ECO:0000250"/>
    <property type="project" value="UniProtKB"/>
</dbReference>
<dbReference type="GO" id="GO:0008173">
    <property type="term" value="F:RNA methyltransferase activity"/>
    <property type="evidence" value="ECO:0007669"/>
    <property type="project" value="UniProtKB-ARBA"/>
</dbReference>
<dbReference type="GO" id="GO:0008757">
    <property type="term" value="F:S-adenosylmethionine-dependent methyltransferase activity"/>
    <property type="evidence" value="ECO:0007669"/>
    <property type="project" value="UniProtKB-ARBA"/>
</dbReference>
<dbReference type="GO" id="GO:0032259">
    <property type="term" value="P:methylation"/>
    <property type="evidence" value="ECO:0007669"/>
    <property type="project" value="UniProtKB-KW"/>
</dbReference>
<dbReference type="GO" id="GO:0008033">
    <property type="term" value="P:tRNA processing"/>
    <property type="evidence" value="ECO:0007669"/>
    <property type="project" value="UniProtKB-KW"/>
</dbReference>
<dbReference type="CDD" id="cd02440">
    <property type="entry name" value="AdoMet_MTases"/>
    <property type="match status" value="1"/>
</dbReference>
<dbReference type="FunFam" id="3.40.50.150:FF:000279">
    <property type="entry name" value="Methyltransferase-like protein"/>
    <property type="match status" value="1"/>
</dbReference>
<dbReference type="Gene3D" id="3.40.50.150">
    <property type="entry name" value="Vaccinia Virus protein VP39"/>
    <property type="match status" value="1"/>
</dbReference>
<dbReference type="InterPro" id="IPR013217">
    <property type="entry name" value="Methyltransf_12"/>
</dbReference>
<dbReference type="InterPro" id="IPR026113">
    <property type="entry name" value="METTL2/6/8-like"/>
</dbReference>
<dbReference type="InterPro" id="IPR029063">
    <property type="entry name" value="SAM-dependent_MTases_sf"/>
</dbReference>
<dbReference type="PANTHER" id="PTHR22809">
    <property type="entry name" value="METHYLTRANSFERASE-RELATED"/>
    <property type="match status" value="1"/>
</dbReference>
<dbReference type="PANTHER" id="PTHR22809:SF5">
    <property type="entry name" value="TRNA N(3)-METHYLCYTIDINE METHYLTRANSFERASE METTL6"/>
    <property type="match status" value="1"/>
</dbReference>
<dbReference type="Pfam" id="PF08242">
    <property type="entry name" value="Methyltransf_12"/>
    <property type="match status" value="1"/>
</dbReference>
<dbReference type="PIRSF" id="PIRSF037755">
    <property type="entry name" value="Mettl2_prd"/>
    <property type="match status" value="1"/>
</dbReference>
<dbReference type="SUPFAM" id="SSF53335">
    <property type="entry name" value="S-adenosyl-L-methionine-dependent methyltransferases"/>
    <property type="match status" value="1"/>
</dbReference>
<reference key="1">
    <citation type="submission" date="2004-11" db="EMBL/GenBank/DDBJ databases">
        <authorList>
            <consortium name="The German cDNA consortium"/>
        </authorList>
    </citation>
    <scope>NUCLEOTIDE SEQUENCE [LARGE SCALE MRNA]</scope>
    <source>
        <tissue>Brain cortex</tissue>
    </source>
</reference>